<keyword id="KW-0963">Cytoplasm</keyword>
<keyword id="KW-0479">Metal-binding</keyword>
<keyword id="KW-0489">Methyltransferase</keyword>
<keyword id="KW-0539">Nucleus</keyword>
<keyword id="KW-1185">Reference proteome</keyword>
<keyword id="KW-0949">S-adenosyl-L-methionine</keyword>
<keyword id="KW-0808">Transferase</keyword>
<keyword id="KW-0819">tRNA processing</keyword>
<keyword id="KW-0862">Zinc</keyword>
<keyword id="KW-0863">Zinc-finger</keyword>
<sequence>MTTETGIPEVVKASSETMSADGKPEKPNPSMFPKRQKRDTPKEYSYLRCEYKLPHKNHRQCHMQRKAEEKFCAQHVLLQKDSYAGRERVVCPVDPGHTVWADELQQHMYKCNKVKERMQKEREGWHRDDMNISNPEAKPCVGKKSDITVDYAKWIPVVEAAFKDVEEVPVEILNHEKGLAKRMTEVQNKKHALQQASLIAHMEKTGLLKSSSRILEFGAGRAELSRYINYAICAERQQDDKTAANYLFIDRAMPRMKMDGKLVKDTKDDFPEQPLPLIKRLKMDIKDLMLDGVPVEGPYDANLIVSKHLCGCATDLTLQCLLNSAVFTKEARPAALVIALCCRQICNVQMFPKAGIEWLQERGFDDDGFAALTRMTSWVLCGERPKKEPVEGEQTEAADNETPAPVGHPSGLPAEARKVIGLKCRRLLDQGRLHALRKEGLDARLVQYTEMDISPENVCLIVNK</sequence>
<reference key="1">
    <citation type="journal article" date="2004" name="Nature">
        <title>Genome evolution in yeasts.</title>
        <authorList>
            <person name="Dujon B."/>
            <person name="Sherman D."/>
            <person name="Fischer G."/>
            <person name="Durrens P."/>
            <person name="Casaregola S."/>
            <person name="Lafontaine I."/>
            <person name="de Montigny J."/>
            <person name="Marck C."/>
            <person name="Neuveglise C."/>
            <person name="Talla E."/>
            <person name="Goffard N."/>
            <person name="Frangeul L."/>
            <person name="Aigle M."/>
            <person name="Anthouard V."/>
            <person name="Babour A."/>
            <person name="Barbe V."/>
            <person name="Barnay S."/>
            <person name="Blanchin S."/>
            <person name="Beckerich J.-M."/>
            <person name="Beyne E."/>
            <person name="Bleykasten C."/>
            <person name="Boisrame A."/>
            <person name="Boyer J."/>
            <person name="Cattolico L."/>
            <person name="Confanioleri F."/>
            <person name="de Daruvar A."/>
            <person name="Despons L."/>
            <person name="Fabre E."/>
            <person name="Fairhead C."/>
            <person name="Ferry-Dumazet H."/>
            <person name="Groppi A."/>
            <person name="Hantraye F."/>
            <person name="Hennequin C."/>
            <person name="Jauniaux N."/>
            <person name="Joyet P."/>
            <person name="Kachouri R."/>
            <person name="Kerrest A."/>
            <person name="Koszul R."/>
            <person name="Lemaire M."/>
            <person name="Lesur I."/>
            <person name="Ma L."/>
            <person name="Muller H."/>
            <person name="Nicaud J.-M."/>
            <person name="Nikolski M."/>
            <person name="Oztas S."/>
            <person name="Ozier-Kalogeropoulos O."/>
            <person name="Pellenz S."/>
            <person name="Potier S."/>
            <person name="Richard G.-F."/>
            <person name="Straub M.-L."/>
            <person name="Suleau A."/>
            <person name="Swennen D."/>
            <person name="Tekaia F."/>
            <person name="Wesolowski-Louvel M."/>
            <person name="Westhof E."/>
            <person name="Wirth B."/>
            <person name="Zeniou-Meyer M."/>
            <person name="Zivanovic Y."/>
            <person name="Bolotin-Fukuhara M."/>
            <person name="Thierry A."/>
            <person name="Bouchier C."/>
            <person name="Caudron B."/>
            <person name="Scarpelli C."/>
            <person name="Gaillardin C."/>
            <person name="Weissenbach J."/>
            <person name="Wincker P."/>
            <person name="Souciet J.-L."/>
        </authorList>
    </citation>
    <scope>NUCLEOTIDE SEQUENCE [LARGE SCALE GENOMIC DNA]</scope>
    <source>
        <strain>CLIB 122 / E 150</strain>
    </source>
</reference>
<dbReference type="EC" id="2.1.1.225"/>
<dbReference type="EMBL" id="CR382131">
    <property type="protein sequence ID" value="CAG80055.1"/>
    <property type="molecule type" value="Genomic_DNA"/>
</dbReference>
<dbReference type="RefSeq" id="XP_504454.1">
    <property type="nucleotide sequence ID" value="XM_504454.1"/>
</dbReference>
<dbReference type="FunCoup" id="Q6C4F8">
    <property type="interactions" value="461"/>
</dbReference>
<dbReference type="STRING" id="284591.Q6C4F8"/>
<dbReference type="EnsemblFungi" id="CAG80055">
    <property type="protein sequence ID" value="CAG80055"/>
    <property type="gene ID" value="YALI0_E27137g"/>
</dbReference>
<dbReference type="KEGG" id="yli:2912777"/>
<dbReference type="VEuPathDB" id="FungiDB:YALI0_E27137g"/>
<dbReference type="HOGENOM" id="CLU_027610_1_0_1"/>
<dbReference type="InParanoid" id="Q6C4F8"/>
<dbReference type="OMA" id="HRCSWRS"/>
<dbReference type="OrthoDB" id="125795at4891"/>
<dbReference type="Proteomes" id="UP000001300">
    <property type="component" value="Chromosome E"/>
</dbReference>
<dbReference type="GO" id="GO:0005737">
    <property type="term" value="C:cytoplasm"/>
    <property type="evidence" value="ECO:0007669"/>
    <property type="project" value="UniProtKB-SubCell"/>
</dbReference>
<dbReference type="GO" id="GO:0005730">
    <property type="term" value="C:nucleolus"/>
    <property type="evidence" value="ECO:0007669"/>
    <property type="project" value="UniProtKB-SubCell"/>
</dbReference>
<dbReference type="GO" id="GO:0106050">
    <property type="term" value="F:tRNA 2'-O-methyltransferase activity"/>
    <property type="evidence" value="ECO:0007669"/>
    <property type="project" value="InterPro"/>
</dbReference>
<dbReference type="GO" id="GO:0008175">
    <property type="term" value="F:tRNA methyltransferase activity"/>
    <property type="evidence" value="ECO:0000318"/>
    <property type="project" value="GO_Central"/>
</dbReference>
<dbReference type="GO" id="GO:0008270">
    <property type="term" value="F:zinc ion binding"/>
    <property type="evidence" value="ECO:0007669"/>
    <property type="project" value="UniProtKB-KW"/>
</dbReference>
<dbReference type="GO" id="GO:0030488">
    <property type="term" value="P:tRNA methylation"/>
    <property type="evidence" value="ECO:0000318"/>
    <property type="project" value="GO_Central"/>
</dbReference>
<dbReference type="InterPro" id="IPR007871">
    <property type="entry name" value="Methyltransferase_TRM13"/>
</dbReference>
<dbReference type="InterPro" id="IPR039044">
    <property type="entry name" value="Trm13"/>
</dbReference>
<dbReference type="InterPro" id="IPR022776">
    <property type="entry name" value="TRM13/UPF0224_CHHC_Znf_dom"/>
</dbReference>
<dbReference type="InterPro" id="IPR021721">
    <property type="entry name" value="Znf_CCCH-type_TRM13"/>
</dbReference>
<dbReference type="PANTHER" id="PTHR12998">
    <property type="entry name" value="TRNA:M(4)X MODIFICATION ENZYME TRM13 HOMOLOG"/>
    <property type="match status" value="1"/>
</dbReference>
<dbReference type="PANTHER" id="PTHR12998:SF0">
    <property type="entry name" value="TRNA:M(4)X MODIFICATION ENZYME TRM13 HOMOLOG"/>
    <property type="match status" value="1"/>
</dbReference>
<dbReference type="Pfam" id="PF05206">
    <property type="entry name" value="TRM13"/>
    <property type="match status" value="1"/>
</dbReference>
<dbReference type="Pfam" id="PF11722">
    <property type="entry name" value="zf-TRM13_CCCH"/>
    <property type="match status" value="1"/>
</dbReference>
<dbReference type="Pfam" id="PF05253">
    <property type="entry name" value="zf-U11-48K"/>
    <property type="match status" value="1"/>
</dbReference>
<dbReference type="PROSITE" id="PS51800">
    <property type="entry name" value="ZF_CHHC_U11_48K"/>
    <property type="match status" value="1"/>
</dbReference>
<protein>
    <recommendedName>
        <fullName>tRNA:m(4)X modification enzyme TRM13</fullName>
        <ecNumber>2.1.1.225</ecNumber>
    </recommendedName>
    <alternativeName>
        <fullName>tRNA methylase 13</fullName>
    </alternativeName>
</protein>
<feature type="chain" id="PRO_0000339429" description="tRNA:m(4)X modification enzyme TRM13">
    <location>
        <begin position="1"/>
        <end position="464"/>
    </location>
</feature>
<feature type="zinc finger region" description="CHHC U11-48K-type" evidence="3">
    <location>
        <begin position="88"/>
        <end position="115"/>
    </location>
</feature>
<feature type="region of interest" description="Disordered" evidence="4">
    <location>
        <begin position="1"/>
        <end position="40"/>
    </location>
</feature>
<feature type="region of interest" description="Disordered" evidence="4">
    <location>
        <begin position="385"/>
        <end position="412"/>
    </location>
</feature>
<feature type="binding site" evidence="3">
    <location>
        <position position="91"/>
    </location>
    <ligand>
        <name>Zn(2+)</name>
        <dbReference type="ChEBI" id="CHEBI:29105"/>
    </ligand>
</feature>
<feature type="binding site" evidence="3">
    <location>
        <position position="97"/>
    </location>
    <ligand>
        <name>Zn(2+)</name>
        <dbReference type="ChEBI" id="CHEBI:29105"/>
    </ligand>
</feature>
<feature type="binding site" evidence="3">
    <location>
        <position position="107"/>
    </location>
    <ligand>
        <name>Zn(2+)</name>
        <dbReference type="ChEBI" id="CHEBI:29105"/>
    </ligand>
</feature>
<feature type="binding site" evidence="3">
    <location>
        <position position="111"/>
    </location>
    <ligand>
        <name>Zn(2+)</name>
        <dbReference type="ChEBI" id="CHEBI:29105"/>
    </ligand>
</feature>
<accession>Q6C4F8</accession>
<proteinExistence type="inferred from homology"/>
<gene>
    <name type="primary">TRM13</name>
    <name type="ordered locus">YALI0E27137g</name>
</gene>
<evidence type="ECO:0000250" key="1"/>
<evidence type="ECO:0000250" key="2">
    <source>
        <dbReference type="UniProtKB" id="Q12383"/>
    </source>
</evidence>
<evidence type="ECO:0000255" key="3">
    <source>
        <dbReference type="PROSITE-ProRule" id="PRU01141"/>
    </source>
</evidence>
<evidence type="ECO:0000256" key="4">
    <source>
        <dbReference type="SAM" id="MobiDB-lite"/>
    </source>
</evidence>
<evidence type="ECO:0000305" key="5"/>
<organism>
    <name type="scientific">Yarrowia lipolytica (strain CLIB 122 / E 150)</name>
    <name type="common">Yeast</name>
    <name type="synonym">Candida lipolytica</name>
    <dbReference type="NCBI Taxonomy" id="284591"/>
    <lineage>
        <taxon>Eukaryota</taxon>
        <taxon>Fungi</taxon>
        <taxon>Dikarya</taxon>
        <taxon>Ascomycota</taxon>
        <taxon>Saccharomycotina</taxon>
        <taxon>Dipodascomycetes</taxon>
        <taxon>Dipodascales</taxon>
        <taxon>Dipodascales incertae sedis</taxon>
        <taxon>Yarrowia</taxon>
    </lineage>
</organism>
<name>TRM13_YARLI</name>
<comment type="function">
    <text evidence="2">tRNA methylase which 2'-O-methylates cytidine(4) in tRNA(Pro) and tRNA(Gly)(GCC), and adenosine(4) in tRNA(His).</text>
</comment>
<comment type="catalytic activity">
    <reaction evidence="2">
        <text>cytidine(4) in tRNA(Pro) + S-adenosyl-L-methionine = 2'-O-methylcytidine(4) in tRNA(Pro) + S-adenosyl-L-homocysteine + H(+)</text>
        <dbReference type="Rhea" id="RHEA:32767"/>
        <dbReference type="Rhea" id="RHEA-COMP:10397"/>
        <dbReference type="Rhea" id="RHEA-COMP:10398"/>
        <dbReference type="ChEBI" id="CHEBI:15378"/>
        <dbReference type="ChEBI" id="CHEBI:57856"/>
        <dbReference type="ChEBI" id="CHEBI:59789"/>
        <dbReference type="ChEBI" id="CHEBI:74495"/>
        <dbReference type="ChEBI" id="CHEBI:82748"/>
        <dbReference type="EC" id="2.1.1.225"/>
    </reaction>
</comment>
<comment type="catalytic activity">
    <reaction evidence="2">
        <text>cytidine(4) in tRNA(Gly)(GCC) + S-adenosyl-L-methionine = 2'-O-methylcytidine(4) in tRNA(Gly)(GCC) + S-adenosyl-L-homocysteine + H(+)</text>
        <dbReference type="Rhea" id="RHEA:43192"/>
        <dbReference type="Rhea" id="RHEA-COMP:10399"/>
        <dbReference type="Rhea" id="RHEA-COMP:10400"/>
        <dbReference type="ChEBI" id="CHEBI:15378"/>
        <dbReference type="ChEBI" id="CHEBI:57856"/>
        <dbReference type="ChEBI" id="CHEBI:59789"/>
        <dbReference type="ChEBI" id="CHEBI:74495"/>
        <dbReference type="ChEBI" id="CHEBI:82748"/>
        <dbReference type="EC" id="2.1.1.225"/>
    </reaction>
</comment>
<comment type="catalytic activity">
    <reaction evidence="2">
        <text>adenosine(4) in tRNA(His) + S-adenosyl-L-methionine = 2'-O-methyladenosine(4) in tRNA(His) + S-adenosyl-L-homocysteine + H(+)</text>
        <dbReference type="Rhea" id="RHEA:43196"/>
        <dbReference type="Rhea" id="RHEA-COMP:10401"/>
        <dbReference type="Rhea" id="RHEA-COMP:10402"/>
        <dbReference type="ChEBI" id="CHEBI:15378"/>
        <dbReference type="ChEBI" id="CHEBI:57856"/>
        <dbReference type="ChEBI" id="CHEBI:59789"/>
        <dbReference type="ChEBI" id="CHEBI:74411"/>
        <dbReference type="ChEBI" id="CHEBI:74477"/>
        <dbReference type="EC" id="2.1.1.225"/>
    </reaction>
</comment>
<comment type="subcellular location">
    <subcellularLocation>
        <location evidence="1">Cytoplasm</location>
    </subcellularLocation>
    <subcellularLocation>
        <location evidence="1">Nucleus</location>
        <location evidence="1">Nucleolus</location>
    </subcellularLocation>
</comment>
<comment type="similarity">
    <text evidence="5">Belongs to the methyltransferase TRM13 family.</text>
</comment>